<gene>
    <name evidence="1" type="primary">cidA</name>
    <name type="ordered locus">BCE33L3375</name>
</gene>
<reference key="1">
    <citation type="journal article" date="2006" name="J. Bacteriol.">
        <title>Pathogenomic sequence analysis of Bacillus cereus and Bacillus thuringiensis isolates closely related to Bacillus anthracis.</title>
        <authorList>
            <person name="Han C.S."/>
            <person name="Xie G."/>
            <person name="Challacombe J.F."/>
            <person name="Altherr M.R."/>
            <person name="Bhotika S.S."/>
            <person name="Bruce D."/>
            <person name="Campbell C.S."/>
            <person name="Campbell M.L."/>
            <person name="Chen J."/>
            <person name="Chertkov O."/>
            <person name="Cleland C."/>
            <person name="Dimitrijevic M."/>
            <person name="Doggett N.A."/>
            <person name="Fawcett J.J."/>
            <person name="Glavina T."/>
            <person name="Goodwin L.A."/>
            <person name="Hill K.K."/>
            <person name="Hitchcock P."/>
            <person name="Jackson P.J."/>
            <person name="Keim P."/>
            <person name="Kewalramani A.R."/>
            <person name="Longmire J."/>
            <person name="Lucas S."/>
            <person name="Malfatti S."/>
            <person name="McMurry K."/>
            <person name="Meincke L.J."/>
            <person name="Misra M."/>
            <person name="Moseman B.L."/>
            <person name="Mundt M."/>
            <person name="Munk A.C."/>
            <person name="Okinaka R.T."/>
            <person name="Parson-Quintana B."/>
            <person name="Reilly L.P."/>
            <person name="Richardson P."/>
            <person name="Robinson D.L."/>
            <person name="Rubin E."/>
            <person name="Saunders E."/>
            <person name="Tapia R."/>
            <person name="Tesmer J.G."/>
            <person name="Thayer N."/>
            <person name="Thompson L.S."/>
            <person name="Tice H."/>
            <person name="Ticknor L.O."/>
            <person name="Wills P.L."/>
            <person name="Brettin T.S."/>
            <person name="Gilna P."/>
        </authorList>
    </citation>
    <scope>NUCLEOTIDE SEQUENCE [LARGE SCALE GENOMIC DNA]</scope>
    <source>
        <strain>ZK / E33L</strain>
    </source>
</reference>
<dbReference type="EMBL" id="CP000001">
    <property type="protein sequence ID" value="AAU16889.1"/>
    <property type="molecule type" value="Genomic_DNA"/>
</dbReference>
<dbReference type="RefSeq" id="WP_000872364.1">
    <property type="nucleotide sequence ID" value="NZ_CP009968.1"/>
</dbReference>
<dbReference type="SMR" id="Q637F8"/>
<dbReference type="KEGG" id="bcz:BCE33L3375"/>
<dbReference type="PATRIC" id="fig|288681.22.peg.2043"/>
<dbReference type="Proteomes" id="UP000002612">
    <property type="component" value="Chromosome"/>
</dbReference>
<dbReference type="GO" id="GO:0005886">
    <property type="term" value="C:plasma membrane"/>
    <property type="evidence" value="ECO:0007669"/>
    <property type="project" value="UniProtKB-SubCell"/>
</dbReference>
<dbReference type="GO" id="GO:0019835">
    <property type="term" value="P:cytolysis"/>
    <property type="evidence" value="ECO:0007669"/>
    <property type="project" value="UniProtKB-UniRule"/>
</dbReference>
<dbReference type="GO" id="GO:0031640">
    <property type="term" value="P:killing of cells of another organism"/>
    <property type="evidence" value="ECO:0007669"/>
    <property type="project" value="UniProtKB-KW"/>
</dbReference>
<dbReference type="GO" id="GO:0012501">
    <property type="term" value="P:programmed cell death"/>
    <property type="evidence" value="ECO:0007669"/>
    <property type="project" value="UniProtKB-UniRule"/>
</dbReference>
<dbReference type="HAMAP" id="MF_01143">
    <property type="entry name" value="CidA"/>
    <property type="match status" value="1"/>
</dbReference>
<dbReference type="InterPro" id="IPR023760">
    <property type="entry name" value="Holin-like_CidA"/>
</dbReference>
<dbReference type="InterPro" id="IPR005538">
    <property type="entry name" value="LrgA/CidA"/>
</dbReference>
<dbReference type="NCBIfam" id="NF002460">
    <property type="entry name" value="PRK01658.1"/>
    <property type="match status" value="1"/>
</dbReference>
<dbReference type="PANTHER" id="PTHR33931:SF2">
    <property type="entry name" value="HOLIN-LIKE PROTEIN CIDA"/>
    <property type="match status" value="1"/>
</dbReference>
<dbReference type="PANTHER" id="PTHR33931">
    <property type="entry name" value="HOLIN-LIKE PROTEIN CIDA-RELATED"/>
    <property type="match status" value="1"/>
</dbReference>
<dbReference type="Pfam" id="PF03788">
    <property type="entry name" value="LrgA"/>
    <property type="match status" value="1"/>
</dbReference>
<protein>
    <recommendedName>
        <fullName evidence="1">Holin-like protein CidA</fullName>
    </recommendedName>
</protein>
<sequence>MKWWKLSGQILLLFCFAWTGEWIAKQAHLPVPGSIIGIFLLLISLKFNLVKKEWIQDGADFLLKELILFFIPSAVAVIRYKDTLSQYGIDLILIIMISTLCVTLVTGLLTELLLKRKGSVQ</sequence>
<organism>
    <name type="scientific">Bacillus cereus (strain ZK / E33L)</name>
    <dbReference type="NCBI Taxonomy" id="288681"/>
    <lineage>
        <taxon>Bacteria</taxon>
        <taxon>Bacillati</taxon>
        <taxon>Bacillota</taxon>
        <taxon>Bacilli</taxon>
        <taxon>Bacillales</taxon>
        <taxon>Bacillaceae</taxon>
        <taxon>Bacillus</taxon>
        <taxon>Bacillus cereus group</taxon>
    </lineage>
</organism>
<comment type="function">
    <text evidence="1">Increases the activity of extracellular murein hydrolases possibly by mediating their export via hole formation. Inhibited by the antiholin-like proteins LrgAB. In an unstressed cell, the LrgAB products probably inhibit the function of the CidA protein. When a cell is stressed by the addition of antibiotics or by other factors in the environment, CidA possibly oligomerizes within the bacterial cell membrane, creating lesions that disrupt the proton motive force, which in turn results in loss of cell viability. These lesions are also hypothesized to regulate the subsequent cell lysis by either allowing the murein hydrolases access to the cell wall substrate and/or regulating their activity by a possible change in the cell wall pH that results from loss of membrane potential.</text>
</comment>
<comment type="subcellular location">
    <subcellularLocation>
        <location evidence="1">Cell membrane</location>
        <topology evidence="1">Multi-pass membrane protein</topology>
    </subcellularLocation>
</comment>
<comment type="similarity">
    <text evidence="1">Belongs to the CidA/LrgA family. CidA subfamily.</text>
</comment>
<accession>Q637F8</accession>
<evidence type="ECO:0000255" key="1">
    <source>
        <dbReference type="HAMAP-Rule" id="MF_01143"/>
    </source>
</evidence>
<feature type="chain" id="PRO_1000065447" description="Holin-like protein CidA">
    <location>
        <begin position="1"/>
        <end position="121"/>
    </location>
</feature>
<feature type="transmembrane region" description="Helical" evidence="1">
    <location>
        <begin position="3"/>
        <end position="23"/>
    </location>
</feature>
<feature type="transmembrane region" description="Helical" evidence="1">
    <location>
        <begin position="30"/>
        <end position="50"/>
    </location>
</feature>
<feature type="transmembrane region" description="Helical" evidence="1">
    <location>
        <begin position="58"/>
        <end position="78"/>
    </location>
</feature>
<feature type="transmembrane region" description="Helical" evidence="1">
    <location>
        <begin position="89"/>
        <end position="109"/>
    </location>
</feature>
<proteinExistence type="inferred from homology"/>
<name>CIDA_BACCZ</name>
<keyword id="KW-1003">Cell membrane</keyword>
<keyword id="KW-0204">Cytolysis</keyword>
<keyword id="KW-0472">Membrane</keyword>
<keyword id="KW-0812">Transmembrane</keyword>
<keyword id="KW-1133">Transmembrane helix</keyword>